<dbReference type="EC" id="2.1.1.195" evidence="1"/>
<dbReference type="EMBL" id="CP000557">
    <property type="protein sequence ID" value="ABO67054.1"/>
    <property type="molecule type" value="Genomic_DNA"/>
</dbReference>
<dbReference type="RefSeq" id="WP_011887475.1">
    <property type="nucleotide sequence ID" value="NC_009328.1"/>
</dbReference>
<dbReference type="SMR" id="A4IP00"/>
<dbReference type="KEGG" id="gtn:GTNG_1690"/>
<dbReference type="eggNOG" id="COG1903">
    <property type="taxonomic scope" value="Bacteria"/>
</dbReference>
<dbReference type="HOGENOM" id="CLU_041273_0_0_9"/>
<dbReference type="UniPathway" id="UPA00148">
    <property type="reaction ID" value="UER00227"/>
</dbReference>
<dbReference type="Proteomes" id="UP000001578">
    <property type="component" value="Chromosome"/>
</dbReference>
<dbReference type="GO" id="GO:0043780">
    <property type="term" value="F:cobalt-precorrin-5B C1-methyltransferase activity"/>
    <property type="evidence" value="ECO:0007669"/>
    <property type="project" value="RHEA"/>
</dbReference>
<dbReference type="GO" id="GO:0019251">
    <property type="term" value="P:anaerobic cobalamin biosynthetic process"/>
    <property type="evidence" value="ECO:0007669"/>
    <property type="project" value="UniProtKB-UniRule"/>
</dbReference>
<dbReference type="GO" id="GO:0032259">
    <property type="term" value="P:methylation"/>
    <property type="evidence" value="ECO:0007669"/>
    <property type="project" value="UniProtKB-KW"/>
</dbReference>
<dbReference type="Gene3D" id="3.30.2110.10">
    <property type="entry name" value="CbiD-like"/>
    <property type="match status" value="1"/>
</dbReference>
<dbReference type="HAMAP" id="MF_00787">
    <property type="entry name" value="CbiD"/>
    <property type="match status" value="1"/>
</dbReference>
<dbReference type="InterPro" id="IPR002748">
    <property type="entry name" value="CbiD"/>
</dbReference>
<dbReference type="InterPro" id="IPR036074">
    <property type="entry name" value="CbiD_sf"/>
</dbReference>
<dbReference type="NCBIfam" id="TIGR00312">
    <property type="entry name" value="cbiD"/>
    <property type="match status" value="1"/>
</dbReference>
<dbReference type="NCBIfam" id="NF000849">
    <property type="entry name" value="PRK00075.1-1"/>
    <property type="match status" value="1"/>
</dbReference>
<dbReference type="PANTHER" id="PTHR35863">
    <property type="entry name" value="COBALT-PRECORRIN-5B C(1)-METHYLTRANSFERASE"/>
    <property type="match status" value="1"/>
</dbReference>
<dbReference type="PANTHER" id="PTHR35863:SF1">
    <property type="entry name" value="COBALT-PRECORRIN-5B C(1)-METHYLTRANSFERASE"/>
    <property type="match status" value="1"/>
</dbReference>
<dbReference type="Pfam" id="PF01888">
    <property type="entry name" value="CbiD"/>
    <property type="match status" value="1"/>
</dbReference>
<dbReference type="PIRSF" id="PIRSF026782">
    <property type="entry name" value="CbiD"/>
    <property type="match status" value="1"/>
</dbReference>
<dbReference type="SUPFAM" id="SSF111342">
    <property type="entry name" value="CbiD-like"/>
    <property type="match status" value="1"/>
</dbReference>
<accession>A4IP00</accession>
<evidence type="ECO:0000255" key="1">
    <source>
        <dbReference type="HAMAP-Rule" id="MF_00787"/>
    </source>
</evidence>
<protein>
    <recommendedName>
        <fullName evidence="1">Cobalt-precorrin-5B C(1)-methyltransferase</fullName>
        <ecNumber evidence="1">2.1.1.195</ecNumber>
    </recommendedName>
    <alternativeName>
        <fullName evidence="1">Cobalt-precorrin-6A synthase</fullName>
    </alternativeName>
</protein>
<name>CBID_GEOTN</name>
<keyword id="KW-0169">Cobalamin biosynthesis</keyword>
<keyword id="KW-0489">Methyltransferase</keyword>
<keyword id="KW-0949">S-adenosyl-L-methionine</keyword>
<keyword id="KW-0808">Transferase</keyword>
<sequence>METKKTLREGYTTGLCAAAATKAALTALITGQVQTDATIRIPIGRVVTFSLASCSFDGETATASVVKDGGDDPDATHGALIVSTVSWASSPGVHIDGGEGVGRVTKPGLPVPVGEAAINPVPRQMIHEAVNEVLAQYGLHRGVNVVISVPGGEEIAKKTLNPRLGIMGGISILGTRGIVVPFSTAAYRASIVQALQVAKANGCRHVVITTGGRSEKYAMQEYPHLPEEAFIEMGDFVGFTLKQCKRLGIKMVSMVGMMGKFSKVAQGVMMVHSKSAPVDFGFLAALAEQAGASSALVAAVRGANTAAQVGDMMQEAGCMKFFELLCEACCQAALHEVGGGLTVATSIYTMNGQQLGKAVQTDGDDEVDRCGC</sequence>
<gene>
    <name evidence="1" type="primary">cbiD</name>
    <name type="ordered locus">GTNG_1690</name>
</gene>
<proteinExistence type="inferred from homology"/>
<organism>
    <name type="scientific">Geobacillus thermodenitrificans (strain NG80-2)</name>
    <dbReference type="NCBI Taxonomy" id="420246"/>
    <lineage>
        <taxon>Bacteria</taxon>
        <taxon>Bacillati</taxon>
        <taxon>Bacillota</taxon>
        <taxon>Bacilli</taxon>
        <taxon>Bacillales</taxon>
        <taxon>Anoxybacillaceae</taxon>
        <taxon>Geobacillus</taxon>
    </lineage>
</organism>
<feature type="chain" id="PRO_1000046857" description="Cobalt-precorrin-5B C(1)-methyltransferase">
    <location>
        <begin position="1"/>
        <end position="372"/>
    </location>
</feature>
<comment type="function">
    <text evidence="1">Catalyzes the methylation of C-1 in cobalt-precorrin-5B to form cobalt-precorrin-6A.</text>
</comment>
<comment type="catalytic activity">
    <reaction evidence="1">
        <text>Co-precorrin-5B + S-adenosyl-L-methionine = Co-precorrin-6A + S-adenosyl-L-homocysteine</text>
        <dbReference type="Rhea" id="RHEA:26285"/>
        <dbReference type="ChEBI" id="CHEBI:57856"/>
        <dbReference type="ChEBI" id="CHEBI:59789"/>
        <dbReference type="ChEBI" id="CHEBI:60063"/>
        <dbReference type="ChEBI" id="CHEBI:60064"/>
        <dbReference type="EC" id="2.1.1.195"/>
    </reaction>
</comment>
<comment type="pathway">
    <text evidence="1">Cofactor biosynthesis; adenosylcobalamin biosynthesis; cob(II)yrinate a,c-diamide from sirohydrochlorin (anaerobic route): step 6/10.</text>
</comment>
<comment type="similarity">
    <text evidence="1">Belongs to the CbiD family.</text>
</comment>
<reference key="1">
    <citation type="journal article" date="2007" name="Proc. Natl. Acad. Sci. U.S.A.">
        <title>Genome and proteome of long-chain alkane degrading Geobacillus thermodenitrificans NG80-2 isolated from a deep-subsurface oil reservoir.</title>
        <authorList>
            <person name="Feng L."/>
            <person name="Wang W."/>
            <person name="Cheng J."/>
            <person name="Ren Y."/>
            <person name="Zhao G."/>
            <person name="Gao C."/>
            <person name="Tang Y."/>
            <person name="Liu X."/>
            <person name="Han W."/>
            <person name="Peng X."/>
            <person name="Liu R."/>
            <person name="Wang L."/>
        </authorList>
    </citation>
    <scope>NUCLEOTIDE SEQUENCE [LARGE SCALE GENOMIC DNA]</scope>
    <source>
        <strain>NG80-2</strain>
    </source>
</reference>